<proteinExistence type="evidence at protein level"/>
<comment type="function">
    <text evidence="2">Required for the fusion of female gametophyte polar nuclei.</text>
</comment>
<comment type="tissue specificity">
    <text evidence="3">Mostly expressed in seedlings, leaves and stems, and, to a lower extent, in flowers and roots.</text>
</comment>
<comment type="induction">
    <text evidence="3">Slightly induced in roots by cadmium.</text>
</comment>
<comment type="disruption phenotype">
    <text evidence="2">Impaired fusion of polar nuclei.</text>
</comment>
<comment type="similarity">
    <text evidence="4">Belongs to the selenium-binding protein family.</text>
</comment>
<comment type="sequence caution" evidence="4">
    <conflict type="erroneous gene model prediction">
        <sequence resource="EMBL-CDS" id="CAB46000"/>
    </conflict>
</comment>
<comment type="sequence caution" evidence="4">
    <conflict type="erroneous gene model prediction">
        <sequence resource="EMBL-CDS" id="CAB78446"/>
    </conflict>
</comment>
<sequence length="487" mass="53937">MATETVLATAVSNGKSKGCCKSGPGYATPLAAMAGPREKLIYVTALYSGTGRDKPDYLATVDVDPSSPTFSSVIHRLKMPYIGDELHHTGWNSCSSCHGDASADRRYLVLPGLISGRIYAIDTKTDPKAPSLYKVVEPKEIAEKTGLAFPHTSHCLASGDMLVSCLGDKEGNAKGNGFLLLDSDFNVKSRWDKPGHGPLFGYDFWYQPRFKTMISTSWGAPKAFSKGFNLQHVADGLYGSHLHIYQWPEGEMKQIIDLGNTGLLPLEIRFLHDPSKDTGYVGSALSSNMIRFFKNSDDTWSHEVVISVKPLKVENWILPEMPGLITDFLISLDDRFFYFVNWLHGDIRQYNIEDPKNPVLTGQIWVGGLLQKGSPYKAVGEDGNTYQFDVPQIKGKSLRAGPQMIQLSLDGKRLYATNSLFSAWDRQFYPEIMEKGSHIIQIDVDTDKGGLTLNPDFFVDFGDEPDGPALAHEMRYPGGDCTSDIWI</sequence>
<dbReference type="EMBL" id="Z97335">
    <property type="protein sequence ID" value="CAB46000.1"/>
    <property type="status" value="ALT_SEQ"/>
    <property type="molecule type" value="Genomic_DNA"/>
</dbReference>
<dbReference type="EMBL" id="AL161537">
    <property type="protein sequence ID" value="CAB78446.1"/>
    <property type="status" value="ALT_SEQ"/>
    <property type="molecule type" value="Genomic_DNA"/>
</dbReference>
<dbReference type="EMBL" id="CP002687">
    <property type="protein sequence ID" value="AEE83364.1"/>
    <property type="molecule type" value="Genomic_DNA"/>
</dbReference>
<dbReference type="EMBL" id="AF367311">
    <property type="protein sequence ID" value="AAK32898.1"/>
    <property type="molecule type" value="mRNA"/>
</dbReference>
<dbReference type="EMBL" id="AF370130">
    <property type="protein sequence ID" value="AAK43945.1"/>
    <property type="molecule type" value="mRNA"/>
</dbReference>
<dbReference type="EMBL" id="AY040046">
    <property type="protein sequence ID" value="AAK64104.1"/>
    <property type="molecule type" value="mRNA"/>
</dbReference>
<dbReference type="EMBL" id="AY065104">
    <property type="protein sequence ID" value="AAL38280.1"/>
    <property type="molecule type" value="mRNA"/>
</dbReference>
<dbReference type="EMBL" id="AY065108">
    <property type="protein sequence ID" value="AAL38284.1"/>
    <property type="molecule type" value="mRNA"/>
</dbReference>
<dbReference type="EMBL" id="AY133613">
    <property type="protein sequence ID" value="AAM91443.1"/>
    <property type="molecule type" value="mRNA"/>
</dbReference>
<dbReference type="EMBL" id="AY136288">
    <property type="protein sequence ID" value="AAM96954.1"/>
    <property type="molecule type" value="mRNA"/>
</dbReference>
<dbReference type="EMBL" id="BT000385">
    <property type="protein sequence ID" value="AAN15704.1"/>
    <property type="molecule type" value="mRNA"/>
</dbReference>
<dbReference type="EMBL" id="BT000406">
    <property type="protein sequence ID" value="AAN15725.1"/>
    <property type="molecule type" value="mRNA"/>
</dbReference>
<dbReference type="PIR" id="A85153">
    <property type="entry name" value="A85153"/>
</dbReference>
<dbReference type="RefSeq" id="NP_193140.1">
    <property type="nucleotide sequence ID" value="NM_117479.4"/>
</dbReference>
<dbReference type="SMR" id="Q93WN0"/>
<dbReference type="BioGRID" id="12337">
    <property type="interactions" value="3"/>
</dbReference>
<dbReference type="FunCoup" id="Q93WN0">
    <property type="interactions" value="1085"/>
</dbReference>
<dbReference type="IntAct" id="Q93WN0">
    <property type="interactions" value="1"/>
</dbReference>
<dbReference type="STRING" id="3702.Q93WN0"/>
<dbReference type="iPTMnet" id="Q93WN0"/>
<dbReference type="MetOSite" id="Q93WN0"/>
<dbReference type="PaxDb" id="3702-AT4G14040.1"/>
<dbReference type="ProteomicsDB" id="232860"/>
<dbReference type="EnsemblPlants" id="AT4G14040.1">
    <property type="protein sequence ID" value="AT4G14040.1"/>
    <property type="gene ID" value="AT4G14040"/>
</dbReference>
<dbReference type="GeneID" id="827040"/>
<dbReference type="Gramene" id="AT4G14040.1">
    <property type="protein sequence ID" value="AT4G14040.1"/>
    <property type="gene ID" value="AT4G14040"/>
</dbReference>
<dbReference type="KEGG" id="ath:AT4G14040"/>
<dbReference type="Araport" id="AT4G14040"/>
<dbReference type="TAIR" id="AT4G14040">
    <property type="gene designation" value="SBP2"/>
</dbReference>
<dbReference type="eggNOG" id="KOG0918">
    <property type="taxonomic scope" value="Eukaryota"/>
</dbReference>
<dbReference type="HOGENOM" id="CLU_032512_0_0_1"/>
<dbReference type="InParanoid" id="Q93WN0"/>
<dbReference type="OMA" id="ANWDKKG"/>
<dbReference type="OrthoDB" id="10252446at2759"/>
<dbReference type="PhylomeDB" id="Q93WN0"/>
<dbReference type="PRO" id="PR:Q93WN0"/>
<dbReference type="Proteomes" id="UP000006548">
    <property type="component" value="Chromosome 4"/>
</dbReference>
<dbReference type="ExpressionAtlas" id="Q93WN0">
    <property type="expression patterns" value="baseline and differential"/>
</dbReference>
<dbReference type="GO" id="GO:0005829">
    <property type="term" value="C:cytosol"/>
    <property type="evidence" value="ECO:0007005"/>
    <property type="project" value="TAIR"/>
</dbReference>
<dbReference type="GO" id="GO:0008430">
    <property type="term" value="F:selenium binding"/>
    <property type="evidence" value="ECO:0007669"/>
    <property type="project" value="InterPro"/>
</dbReference>
<dbReference type="GO" id="GO:0010197">
    <property type="term" value="P:polar nucleus fusion"/>
    <property type="evidence" value="ECO:0000315"/>
    <property type="project" value="TAIR"/>
</dbReference>
<dbReference type="InterPro" id="IPR008826">
    <property type="entry name" value="Se-bd"/>
</dbReference>
<dbReference type="PANTHER" id="PTHR23300">
    <property type="entry name" value="METHANETHIOL OXIDASE"/>
    <property type="match status" value="1"/>
</dbReference>
<dbReference type="PANTHER" id="PTHR23300:SF14">
    <property type="entry name" value="SELENIUM-BINDING PROTEIN 2"/>
    <property type="match status" value="1"/>
</dbReference>
<dbReference type="Pfam" id="PF05694">
    <property type="entry name" value="SBP56"/>
    <property type="match status" value="1"/>
</dbReference>
<dbReference type="SUPFAM" id="SSF75011">
    <property type="entry name" value="3-carboxy-cis,cis-mucoante lactonizing enzyme"/>
    <property type="match status" value="1"/>
</dbReference>
<organism>
    <name type="scientific">Arabidopsis thaliana</name>
    <name type="common">Mouse-ear cress</name>
    <dbReference type="NCBI Taxonomy" id="3702"/>
    <lineage>
        <taxon>Eukaryota</taxon>
        <taxon>Viridiplantae</taxon>
        <taxon>Streptophyta</taxon>
        <taxon>Embryophyta</taxon>
        <taxon>Tracheophyta</taxon>
        <taxon>Spermatophyta</taxon>
        <taxon>Magnoliopsida</taxon>
        <taxon>eudicotyledons</taxon>
        <taxon>Gunneridae</taxon>
        <taxon>Pentapetalae</taxon>
        <taxon>rosids</taxon>
        <taxon>malvids</taxon>
        <taxon>Brassicales</taxon>
        <taxon>Brassicaceae</taxon>
        <taxon>Camelineae</taxon>
        <taxon>Arabidopsis</taxon>
    </lineage>
</organism>
<accession>Q93WN0</accession>
<accession>O23265</accession>
<accession>Q8L7F3</accession>
<accession>Q9ASS5</accession>
<keyword id="KW-0007">Acetylation</keyword>
<keyword id="KW-1185">Reference proteome</keyword>
<keyword id="KW-0711">Selenium</keyword>
<feature type="initiator methionine" description="Removed" evidence="5">
    <location>
        <position position="1"/>
    </location>
</feature>
<feature type="chain" id="PRO_0000403644" description="Selenium-binding protein 2">
    <location>
        <begin position="2"/>
        <end position="487"/>
    </location>
</feature>
<feature type="binding site" evidence="1">
    <location>
        <position position="19"/>
    </location>
    <ligand>
        <name>selenite</name>
        <dbReference type="ChEBI" id="CHEBI:18212"/>
    </ligand>
</feature>
<feature type="binding site" evidence="1">
    <location>
        <position position="20"/>
    </location>
    <ligand>
        <name>selenite</name>
        <dbReference type="ChEBI" id="CHEBI:18212"/>
    </ligand>
</feature>
<feature type="modified residue" description="N-acetylalanine" evidence="5">
    <location>
        <position position="2"/>
    </location>
</feature>
<feature type="sequence conflict" description="In Ref. 4; AAK32898/AAM91443." evidence="4" ref="4">
    <original>A</original>
    <variation>V</variation>
    <location>
        <position position="2"/>
    </location>
</feature>
<feature type="sequence conflict" description="In Ref. 4; AAM96954/AAN15725." evidence="4" ref="4">
    <original>P</original>
    <variation>A</variation>
    <location>
        <position position="248"/>
    </location>
</feature>
<gene>
    <name type="primary">SBP2</name>
    <name type="synonym">EDA38</name>
    <name type="ordered locus">At4g14040</name>
    <name type="ORF">dl3061c</name>
    <name type="ORF">FCAALL.29</name>
</gene>
<name>SEBP2_ARATH</name>
<protein>
    <recommendedName>
        <fullName>Selenium-binding protein 2</fullName>
    </recommendedName>
    <alternativeName>
        <fullName>Protein EMBRYO SAC DEVELOPMENT ARREST 38</fullName>
    </alternativeName>
</protein>
<reference key="1">
    <citation type="journal article" date="1998" name="Nature">
        <title>Analysis of 1.9 Mb of contiguous sequence from chromosome 4 of Arabidopsis thaliana.</title>
        <authorList>
            <person name="Bevan M."/>
            <person name="Bancroft I."/>
            <person name="Bent E."/>
            <person name="Love K."/>
            <person name="Goodman H.M."/>
            <person name="Dean C."/>
            <person name="Bergkamp R."/>
            <person name="Dirkse W."/>
            <person name="van Staveren M."/>
            <person name="Stiekema W."/>
            <person name="Drost L."/>
            <person name="Ridley P."/>
            <person name="Hudson S.-A."/>
            <person name="Patel K."/>
            <person name="Murphy G."/>
            <person name="Piffanelli P."/>
            <person name="Wedler H."/>
            <person name="Wedler E."/>
            <person name="Wambutt R."/>
            <person name="Weitzenegger T."/>
            <person name="Pohl T."/>
            <person name="Terryn N."/>
            <person name="Gielen J."/>
            <person name="Villarroel R."/>
            <person name="De Clercq R."/>
            <person name="van Montagu M."/>
            <person name="Lecharny A."/>
            <person name="Aubourg S."/>
            <person name="Gy I."/>
            <person name="Kreis M."/>
            <person name="Lao N."/>
            <person name="Kavanagh T."/>
            <person name="Hempel S."/>
            <person name="Kotter P."/>
            <person name="Entian K.-D."/>
            <person name="Rieger M."/>
            <person name="Schaefer M."/>
            <person name="Funk B."/>
            <person name="Mueller-Auer S."/>
            <person name="Silvey M."/>
            <person name="James R."/>
            <person name="Monfort A."/>
            <person name="Pons A."/>
            <person name="Puigdomenech P."/>
            <person name="Douka A."/>
            <person name="Voukelatou E."/>
            <person name="Milioni D."/>
            <person name="Hatzopoulos P."/>
            <person name="Piravandi E."/>
            <person name="Obermaier B."/>
            <person name="Hilbert H."/>
            <person name="Duesterhoeft A."/>
            <person name="Moores T."/>
            <person name="Jones J.D.G."/>
            <person name="Eneva T."/>
            <person name="Palme K."/>
            <person name="Benes V."/>
            <person name="Rechmann S."/>
            <person name="Ansorge W."/>
            <person name="Cooke R."/>
            <person name="Berger C."/>
            <person name="Delseny M."/>
            <person name="Voet M."/>
            <person name="Volckaert G."/>
            <person name="Mewes H.-W."/>
            <person name="Klosterman S."/>
            <person name="Schueller C."/>
            <person name="Chalwatzis N."/>
        </authorList>
    </citation>
    <scope>NUCLEOTIDE SEQUENCE [LARGE SCALE GENOMIC DNA]</scope>
    <source>
        <strain>cv. Columbia</strain>
    </source>
</reference>
<reference key="2">
    <citation type="journal article" date="1999" name="Nature">
        <title>Sequence and analysis of chromosome 4 of the plant Arabidopsis thaliana.</title>
        <authorList>
            <person name="Mayer K.F.X."/>
            <person name="Schueller C."/>
            <person name="Wambutt R."/>
            <person name="Murphy G."/>
            <person name="Volckaert G."/>
            <person name="Pohl T."/>
            <person name="Duesterhoeft A."/>
            <person name="Stiekema W."/>
            <person name="Entian K.-D."/>
            <person name="Terryn N."/>
            <person name="Harris B."/>
            <person name="Ansorge W."/>
            <person name="Brandt P."/>
            <person name="Grivell L.A."/>
            <person name="Rieger M."/>
            <person name="Weichselgartner M."/>
            <person name="de Simone V."/>
            <person name="Obermaier B."/>
            <person name="Mache R."/>
            <person name="Mueller M."/>
            <person name="Kreis M."/>
            <person name="Delseny M."/>
            <person name="Puigdomenech P."/>
            <person name="Watson M."/>
            <person name="Schmidtheini T."/>
            <person name="Reichert B."/>
            <person name="Portetelle D."/>
            <person name="Perez-Alonso M."/>
            <person name="Boutry M."/>
            <person name="Bancroft I."/>
            <person name="Vos P."/>
            <person name="Hoheisel J."/>
            <person name="Zimmermann W."/>
            <person name="Wedler H."/>
            <person name="Ridley P."/>
            <person name="Langham S.-A."/>
            <person name="McCullagh B."/>
            <person name="Bilham L."/>
            <person name="Robben J."/>
            <person name="van der Schueren J."/>
            <person name="Grymonprez B."/>
            <person name="Chuang Y.-J."/>
            <person name="Vandenbussche F."/>
            <person name="Braeken M."/>
            <person name="Weltjens I."/>
            <person name="Voet M."/>
            <person name="Bastiaens I."/>
            <person name="Aert R."/>
            <person name="Defoor E."/>
            <person name="Weitzenegger T."/>
            <person name="Bothe G."/>
            <person name="Ramsperger U."/>
            <person name="Hilbert H."/>
            <person name="Braun M."/>
            <person name="Holzer E."/>
            <person name="Brandt A."/>
            <person name="Peters S."/>
            <person name="van Staveren M."/>
            <person name="Dirkse W."/>
            <person name="Mooijman P."/>
            <person name="Klein Lankhorst R."/>
            <person name="Rose M."/>
            <person name="Hauf J."/>
            <person name="Koetter P."/>
            <person name="Berneiser S."/>
            <person name="Hempel S."/>
            <person name="Feldpausch M."/>
            <person name="Lamberth S."/>
            <person name="Van den Daele H."/>
            <person name="De Keyser A."/>
            <person name="Buysshaert C."/>
            <person name="Gielen J."/>
            <person name="Villarroel R."/>
            <person name="De Clercq R."/>
            <person name="van Montagu M."/>
            <person name="Rogers J."/>
            <person name="Cronin A."/>
            <person name="Quail M.A."/>
            <person name="Bray-Allen S."/>
            <person name="Clark L."/>
            <person name="Doggett J."/>
            <person name="Hall S."/>
            <person name="Kay M."/>
            <person name="Lennard N."/>
            <person name="McLay K."/>
            <person name="Mayes R."/>
            <person name="Pettett A."/>
            <person name="Rajandream M.A."/>
            <person name="Lyne M."/>
            <person name="Benes V."/>
            <person name="Rechmann S."/>
            <person name="Borkova D."/>
            <person name="Bloecker H."/>
            <person name="Scharfe M."/>
            <person name="Grimm M."/>
            <person name="Loehnert T.-H."/>
            <person name="Dose S."/>
            <person name="de Haan M."/>
            <person name="Maarse A.C."/>
            <person name="Schaefer M."/>
            <person name="Mueller-Auer S."/>
            <person name="Gabel C."/>
            <person name="Fuchs M."/>
            <person name="Fartmann B."/>
            <person name="Granderath K."/>
            <person name="Dauner D."/>
            <person name="Herzl A."/>
            <person name="Neumann S."/>
            <person name="Argiriou A."/>
            <person name="Vitale D."/>
            <person name="Liguori R."/>
            <person name="Piravandi E."/>
            <person name="Massenet O."/>
            <person name="Quigley F."/>
            <person name="Clabauld G."/>
            <person name="Muendlein A."/>
            <person name="Felber R."/>
            <person name="Schnabl S."/>
            <person name="Hiller R."/>
            <person name="Schmidt W."/>
            <person name="Lecharny A."/>
            <person name="Aubourg S."/>
            <person name="Chefdor F."/>
            <person name="Cooke R."/>
            <person name="Berger C."/>
            <person name="Monfort A."/>
            <person name="Casacuberta E."/>
            <person name="Gibbons T."/>
            <person name="Weber N."/>
            <person name="Vandenbol M."/>
            <person name="Bargues M."/>
            <person name="Terol J."/>
            <person name="Torres A."/>
            <person name="Perez-Perez A."/>
            <person name="Purnelle B."/>
            <person name="Bent E."/>
            <person name="Johnson S."/>
            <person name="Tacon D."/>
            <person name="Jesse T."/>
            <person name="Heijnen L."/>
            <person name="Schwarz S."/>
            <person name="Scholler P."/>
            <person name="Heber S."/>
            <person name="Francs P."/>
            <person name="Bielke C."/>
            <person name="Frishman D."/>
            <person name="Haase D."/>
            <person name="Lemcke K."/>
            <person name="Mewes H.-W."/>
            <person name="Stocker S."/>
            <person name="Zaccaria P."/>
            <person name="Bevan M."/>
            <person name="Wilson R.K."/>
            <person name="de la Bastide M."/>
            <person name="Habermann K."/>
            <person name="Parnell L."/>
            <person name="Dedhia N."/>
            <person name="Gnoj L."/>
            <person name="Schutz K."/>
            <person name="Huang E."/>
            <person name="Spiegel L."/>
            <person name="Sekhon M."/>
            <person name="Murray J."/>
            <person name="Sheet P."/>
            <person name="Cordes M."/>
            <person name="Abu-Threideh J."/>
            <person name="Stoneking T."/>
            <person name="Kalicki J."/>
            <person name="Graves T."/>
            <person name="Harmon G."/>
            <person name="Edwards J."/>
            <person name="Latreille P."/>
            <person name="Courtney L."/>
            <person name="Cloud J."/>
            <person name="Abbott A."/>
            <person name="Scott K."/>
            <person name="Johnson D."/>
            <person name="Minx P."/>
            <person name="Bentley D."/>
            <person name="Fulton B."/>
            <person name="Miller N."/>
            <person name="Greco T."/>
            <person name="Kemp K."/>
            <person name="Kramer J."/>
            <person name="Fulton L."/>
            <person name="Mardis E."/>
            <person name="Dante M."/>
            <person name="Pepin K."/>
            <person name="Hillier L.W."/>
            <person name="Nelson J."/>
            <person name="Spieth J."/>
            <person name="Ryan E."/>
            <person name="Andrews S."/>
            <person name="Geisel C."/>
            <person name="Layman D."/>
            <person name="Du H."/>
            <person name="Ali J."/>
            <person name="Berghoff A."/>
            <person name="Jones K."/>
            <person name="Drone K."/>
            <person name="Cotton M."/>
            <person name="Joshu C."/>
            <person name="Antonoiu B."/>
            <person name="Zidanic M."/>
            <person name="Strong C."/>
            <person name="Sun H."/>
            <person name="Lamar B."/>
            <person name="Yordan C."/>
            <person name="Ma P."/>
            <person name="Zhong J."/>
            <person name="Preston R."/>
            <person name="Vil D."/>
            <person name="Shekher M."/>
            <person name="Matero A."/>
            <person name="Shah R."/>
            <person name="Swaby I.K."/>
            <person name="O'Shaughnessy A."/>
            <person name="Rodriguez M."/>
            <person name="Hoffman J."/>
            <person name="Till S."/>
            <person name="Granat S."/>
            <person name="Shohdy N."/>
            <person name="Hasegawa A."/>
            <person name="Hameed A."/>
            <person name="Lodhi M."/>
            <person name="Johnson A."/>
            <person name="Chen E."/>
            <person name="Marra M.A."/>
            <person name="Martienssen R."/>
            <person name="McCombie W.R."/>
        </authorList>
    </citation>
    <scope>NUCLEOTIDE SEQUENCE [LARGE SCALE GENOMIC DNA]</scope>
    <source>
        <strain>cv. Columbia</strain>
    </source>
</reference>
<reference key="3">
    <citation type="journal article" date="2017" name="Plant J.">
        <title>Araport11: a complete reannotation of the Arabidopsis thaliana reference genome.</title>
        <authorList>
            <person name="Cheng C.Y."/>
            <person name="Krishnakumar V."/>
            <person name="Chan A.P."/>
            <person name="Thibaud-Nissen F."/>
            <person name="Schobel S."/>
            <person name="Town C.D."/>
        </authorList>
    </citation>
    <scope>GENOME REANNOTATION</scope>
    <source>
        <strain>cv. Columbia</strain>
    </source>
</reference>
<reference key="4">
    <citation type="journal article" date="2003" name="Science">
        <title>Empirical analysis of transcriptional activity in the Arabidopsis genome.</title>
        <authorList>
            <person name="Yamada K."/>
            <person name="Lim J."/>
            <person name="Dale J.M."/>
            <person name="Chen H."/>
            <person name="Shinn P."/>
            <person name="Palm C.J."/>
            <person name="Southwick A.M."/>
            <person name="Wu H.C."/>
            <person name="Kim C.J."/>
            <person name="Nguyen M."/>
            <person name="Pham P.K."/>
            <person name="Cheuk R.F."/>
            <person name="Karlin-Newmann G."/>
            <person name="Liu S.X."/>
            <person name="Lam B."/>
            <person name="Sakano H."/>
            <person name="Wu T."/>
            <person name="Yu G."/>
            <person name="Miranda M."/>
            <person name="Quach H.L."/>
            <person name="Tripp M."/>
            <person name="Chang C.H."/>
            <person name="Lee J.M."/>
            <person name="Toriumi M.J."/>
            <person name="Chan M.M."/>
            <person name="Tang C.C."/>
            <person name="Onodera C.S."/>
            <person name="Deng J.M."/>
            <person name="Akiyama K."/>
            <person name="Ansari Y."/>
            <person name="Arakawa T."/>
            <person name="Banh J."/>
            <person name="Banno F."/>
            <person name="Bowser L."/>
            <person name="Brooks S.Y."/>
            <person name="Carninci P."/>
            <person name="Chao Q."/>
            <person name="Choy N."/>
            <person name="Enju A."/>
            <person name="Goldsmith A.D."/>
            <person name="Gurjal M."/>
            <person name="Hansen N.F."/>
            <person name="Hayashizaki Y."/>
            <person name="Johnson-Hopson C."/>
            <person name="Hsuan V.W."/>
            <person name="Iida K."/>
            <person name="Karnes M."/>
            <person name="Khan S."/>
            <person name="Koesema E."/>
            <person name="Ishida J."/>
            <person name="Jiang P.X."/>
            <person name="Jones T."/>
            <person name="Kawai J."/>
            <person name="Kamiya A."/>
            <person name="Meyers C."/>
            <person name="Nakajima M."/>
            <person name="Narusaka M."/>
            <person name="Seki M."/>
            <person name="Sakurai T."/>
            <person name="Satou M."/>
            <person name="Tamse R."/>
            <person name="Vaysberg M."/>
            <person name="Wallender E.K."/>
            <person name="Wong C."/>
            <person name="Yamamura Y."/>
            <person name="Yuan S."/>
            <person name="Shinozaki K."/>
            <person name="Davis R.W."/>
            <person name="Theologis A."/>
            <person name="Ecker J.R."/>
        </authorList>
    </citation>
    <scope>NUCLEOTIDE SEQUENCE [LARGE SCALE MRNA]</scope>
    <source>
        <strain>cv. Columbia</strain>
    </source>
</reference>
<reference key="5">
    <citation type="journal article" date="2005" name="Development">
        <title>Genetic and molecular identification of genes required for female gametophyte development and function in Arabidopsis.</title>
        <authorList>
            <person name="Pagnussat G.C."/>
            <person name="Yu H.-J."/>
            <person name="Ngo Q.A."/>
            <person name="Rajani S."/>
            <person name="Mayalagu S."/>
            <person name="Johnson C.S."/>
            <person name="Capron A."/>
            <person name="Xie L.-F."/>
            <person name="Ye D."/>
            <person name="Sundaresan V."/>
        </authorList>
    </citation>
    <scope>FUNCTION</scope>
    <scope>DISRUPTION PHENOTYPE</scope>
</reference>
<reference key="6">
    <citation type="journal article" date="2008" name="Plant Physiol.">
        <title>The Arabidopsis putative selenium-binding protein family: expression study and characterization of SBP1 as a potential new player in cadmium detoxification processes.</title>
        <authorList>
            <person name="Dutilleul C."/>
            <person name="Jourdain A."/>
            <person name="Bourguignon J."/>
            <person name="Hugouvieux V."/>
        </authorList>
    </citation>
    <scope>TISSUE SPECIFICITY</scope>
    <scope>INDUCTION BY CADMIUM</scope>
</reference>
<reference key="7">
    <citation type="journal article" date="2012" name="Mol. Cell. Proteomics">
        <title>Comparative large-scale characterisation of plant vs. mammal proteins reveals similar and idiosyncratic N-alpha acetylation features.</title>
        <authorList>
            <person name="Bienvenut W.V."/>
            <person name="Sumpton D."/>
            <person name="Martinez A."/>
            <person name="Lilla S."/>
            <person name="Espagne C."/>
            <person name="Meinnel T."/>
            <person name="Giglione C."/>
        </authorList>
    </citation>
    <scope>ACETYLATION [LARGE SCALE ANALYSIS] AT ALA-2</scope>
    <scope>CLEAVAGE OF INITIATOR METHIONINE [LARGE SCALE ANALYSIS]</scope>
    <scope>IDENTIFICATION BY MASS SPECTROMETRY [LARGE SCALE ANALYSIS]</scope>
</reference>
<evidence type="ECO:0000250" key="1">
    <source>
        <dbReference type="UniProtKB" id="O23264"/>
    </source>
</evidence>
<evidence type="ECO:0000269" key="2">
    <source>
    </source>
</evidence>
<evidence type="ECO:0000269" key="3">
    <source>
    </source>
</evidence>
<evidence type="ECO:0000305" key="4"/>
<evidence type="ECO:0007744" key="5">
    <source>
    </source>
</evidence>